<reference key="1">
    <citation type="submission" date="2006-05" db="EMBL/GenBank/DDBJ databases">
        <authorList>
            <consortium name="Genoscope"/>
        </authorList>
    </citation>
    <scope>NUCLEOTIDE SEQUENCE [LARGE SCALE GENOMIC DNA]</scope>
    <source>
        <strain>RCC307</strain>
    </source>
</reference>
<feature type="chain" id="PRO_1000056209" description="Bifunctional protein GlmU">
    <location>
        <begin position="1"/>
        <end position="450"/>
    </location>
</feature>
<feature type="region of interest" description="Pyrophosphorylase" evidence="1">
    <location>
        <begin position="1"/>
        <end position="226"/>
    </location>
</feature>
<feature type="region of interest" description="Linker" evidence="1">
    <location>
        <begin position="227"/>
        <end position="247"/>
    </location>
</feature>
<feature type="region of interest" description="N-acetyltransferase" evidence="1">
    <location>
        <begin position="248"/>
        <end position="450"/>
    </location>
</feature>
<feature type="active site" description="Proton acceptor" evidence="1">
    <location>
        <position position="359"/>
    </location>
</feature>
<feature type="binding site" evidence="1">
    <location>
        <begin position="7"/>
        <end position="10"/>
    </location>
    <ligand>
        <name>UDP-N-acetyl-alpha-D-glucosamine</name>
        <dbReference type="ChEBI" id="CHEBI:57705"/>
    </ligand>
</feature>
<feature type="binding site" evidence="1">
    <location>
        <position position="21"/>
    </location>
    <ligand>
        <name>UDP-N-acetyl-alpha-D-glucosamine</name>
        <dbReference type="ChEBI" id="CHEBI:57705"/>
    </ligand>
</feature>
<feature type="binding site" evidence="1">
    <location>
        <position position="73"/>
    </location>
    <ligand>
        <name>UDP-N-acetyl-alpha-D-glucosamine</name>
        <dbReference type="ChEBI" id="CHEBI:57705"/>
    </ligand>
</feature>
<feature type="binding site" evidence="1">
    <location>
        <begin position="78"/>
        <end position="79"/>
    </location>
    <ligand>
        <name>UDP-N-acetyl-alpha-D-glucosamine</name>
        <dbReference type="ChEBI" id="CHEBI:57705"/>
    </ligand>
</feature>
<feature type="binding site" evidence="1">
    <location>
        <position position="103"/>
    </location>
    <ligand>
        <name>Mg(2+)</name>
        <dbReference type="ChEBI" id="CHEBI:18420"/>
    </ligand>
</feature>
<feature type="binding site" evidence="1">
    <location>
        <position position="140"/>
    </location>
    <ligand>
        <name>UDP-N-acetyl-alpha-D-glucosamine</name>
        <dbReference type="ChEBI" id="CHEBI:57705"/>
    </ligand>
</feature>
<feature type="binding site" evidence="1">
    <location>
        <position position="155"/>
    </location>
    <ligand>
        <name>UDP-N-acetyl-alpha-D-glucosamine</name>
        <dbReference type="ChEBI" id="CHEBI:57705"/>
    </ligand>
</feature>
<feature type="binding site" evidence="1">
    <location>
        <position position="170"/>
    </location>
    <ligand>
        <name>UDP-N-acetyl-alpha-D-glucosamine</name>
        <dbReference type="ChEBI" id="CHEBI:57705"/>
    </ligand>
</feature>
<feature type="binding site" evidence="1">
    <location>
        <position position="224"/>
    </location>
    <ligand>
        <name>Mg(2+)</name>
        <dbReference type="ChEBI" id="CHEBI:18420"/>
    </ligand>
</feature>
<feature type="binding site" evidence="1">
    <location>
        <position position="224"/>
    </location>
    <ligand>
        <name>UDP-N-acetyl-alpha-D-glucosamine</name>
        <dbReference type="ChEBI" id="CHEBI:57705"/>
    </ligand>
</feature>
<feature type="binding site" evidence="1">
    <location>
        <position position="329"/>
    </location>
    <ligand>
        <name>UDP-N-acetyl-alpha-D-glucosamine</name>
        <dbReference type="ChEBI" id="CHEBI:57705"/>
    </ligand>
</feature>
<feature type="binding site" evidence="1">
    <location>
        <position position="347"/>
    </location>
    <ligand>
        <name>UDP-N-acetyl-alpha-D-glucosamine</name>
        <dbReference type="ChEBI" id="CHEBI:57705"/>
    </ligand>
</feature>
<feature type="binding site" evidence="1">
    <location>
        <position position="362"/>
    </location>
    <ligand>
        <name>UDP-N-acetyl-alpha-D-glucosamine</name>
        <dbReference type="ChEBI" id="CHEBI:57705"/>
    </ligand>
</feature>
<feature type="binding site" evidence="1">
    <location>
        <position position="373"/>
    </location>
    <ligand>
        <name>UDP-N-acetyl-alpha-D-glucosamine</name>
        <dbReference type="ChEBI" id="CHEBI:57705"/>
    </ligand>
</feature>
<feature type="binding site" evidence="1">
    <location>
        <position position="376"/>
    </location>
    <ligand>
        <name>acetyl-CoA</name>
        <dbReference type="ChEBI" id="CHEBI:57288"/>
    </ligand>
</feature>
<feature type="binding site" evidence="1">
    <location>
        <begin position="382"/>
        <end position="383"/>
    </location>
    <ligand>
        <name>acetyl-CoA</name>
        <dbReference type="ChEBI" id="CHEBI:57288"/>
    </ligand>
</feature>
<feature type="binding site" evidence="1">
    <location>
        <position position="419"/>
    </location>
    <ligand>
        <name>acetyl-CoA</name>
        <dbReference type="ChEBI" id="CHEBI:57288"/>
    </ligand>
</feature>
<feature type="binding site" evidence="1">
    <location>
        <position position="436"/>
    </location>
    <ligand>
        <name>acetyl-CoA</name>
        <dbReference type="ChEBI" id="CHEBI:57288"/>
    </ligand>
</feature>
<evidence type="ECO:0000255" key="1">
    <source>
        <dbReference type="HAMAP-Rule" id="MF_01631"/>
    </source>
</evidence>
<proteinExistence type="inferred from homology"/>
<sequence length="450" mass="48030">MLAVAVLAAGKGTRMKSNLPKVLQPLAGATLVERVLASARNLRPERRLLIVGHQAERVEQQLSAVDGLEFVLQQPQNGTGHAVQQLLDPLANFEGELLVLNGDVPLLRAETIDQLVSTHRSSGAQVTLLTARLDDPTGYGRVFADEQGAVSSIIEHRDCSEEQRRNNLTNAGIYCFNWTALAEVLPKLSTDNDQGELYLTDTVAMLTKAMHVEVADPDEVNGINNRQQLAQCETMLQERLRHHWMAEGVTFVDPASCTLSEGCQFGRDVVIEPQTHLRGRCQIGDESRLGPGSLIEDAELGRGVTVVMSVVREASVGDGVCIGPFAHLRPAAVIGNNCRIGNFVEVKKSTVGEASKVNHLSYIGDAELGASVNVGAGTITANYDGVNKHRTVIGDGSKTGANSVLVAPIQLGNKVTVAAGSTLTKNVPDGALALGRAKQLIKENWAGPQG</sequence>
<gene>
    <name evidence="1" type="primary">glmU</name>
    <name type="ordered locus">SynRCC307_1148</name>
</gene>
<protein>
    <recommendedName>
        <fullName evidence="1">Bifunctional protein GlmU</fullName>
    </recommendedName>
    <domain>
        <recommendedName>
            <fullName evidence="1">UDP-N-acetylglucosamine pyrophosphorylase</fullName>
            <ecNumber evidence="1">2.7.7.23</ecNumber>
        </recommendedName>
        <alternativeName>
            <fullName evidence="1">N-acetylglucosamine-1-phosphate uridyltransferase</fullName>
        </alternativeName>
    </domain>
    <domain>
        <recommendedName>
            <fullName evidence="1">Glucosamine-1-phosphate N-acetyltransferase</fullName>
            <ecNumber evidence="1">2.3.1.157</ecNumber>
        </recommendedName>
    </domain>
</protein>
<accession>A5GT42</accession>
<organism>
    <name type="scientific">Synechococcus sp. (strain RCC307)</name>
    <dbReference type="NCBI Taxonomy" id="316278"/>
    <lineage>
        <taxon>Bacteria</taxon>
        <taxon>Bacillati</taxon>
        <taxon>Cyanobacteriota</taxon>
        <taxon>Cyanophyceae</taxon>
        <taxon>Synechococcales</taxon>
        <taxon>Synechococcaceae</taxon>
        <taxon>Synechococcus</taxon>
    </lineage>
</organism>
<keyword id="KW-0012">Acyltransferase</keyword>
<keyword id="KW-0133">Cell shape</keyword>
<keyword id="KW-0961">Cell wall biogenesis/degradation</keyword>
<keyword id="KW-0963">Cytoplasm</keyword>
<keyword id="KW-0460">Magnesium</keyword>
<keyword id="KW-0479">Metal-binding</keyword>
<keyword id="KW-0511">Multifunctional enzyme</keyword>
<keyword id="KW-0548">Nucleotidyltransferase</keyword>
<keyword id="KW-0573">Peptidoglycan synthesis</keyword>
<keyword id="KW-1185">Reference proteome</keyword>
<keyword id="KW-0677">Repeat</keyword>
<keyword id="KW-0808">Transferase</keyword>
<dbReference type="EC" id="2.7.7.23" evidence="1"/>
<dbReference type="EC" id="2.3.1.157" evidence="1"/>
<dbReference type="EMBL" id="CT978603">
    <property type="protein sequence ID" value="CAK28051.1"/>
    <property type="molecule type" value="Genomic_DNA"/>
</dbReference>
<dbReference type="SMR" id="A5GT42"/>
<dbReference type="STRING" id="316278.SynRCC307_1148"/>
<dbReference type="KEGG" id="syr:SynRCC307_1148"/>
<dbReference type="eggNOG" id="COG1207">
    <property type="taxonomic scope" value="Bacteria"/>
</dbReference>
<dbReference type="HOGENOM" id="CLU_029499_15_2_3"/>
<dbReference type="OrthoDB" id="9775031at2"/>
<dbReference type="UniPathway" id="UPA00113">
    <property type="reaction ID" value="UER00532"/>
</dbReference>
<dbReference type="UniPathway" id="UPA00113">
    <property type="reaction ID" value="UER00533"/>
</dbReference>
<dbReference type="UniPathway" id="UPA00973"/>
<dbReference type="Proteomes" id="UP000001115">
    <property type="component" value="Chromosome"/>
</dbReference>
<dbReference type="GO" id="GO:0031470">
    <property type="term" value="C:carboxysome"/>
    <property type="evidence" value="ECO:0007669"/>
    <property type="project" value="UniProtKB-ARBA"/>
</dbReference>
<dbReference type="GO" id="GO:0005737">
    <property type="term" value="C:cytoplasm"/>
    <property type="evidence" value="ECO:0007669"/>
    <property type="project" value="UniProtKB-SubCell"/>
</dbReference>
<dbReference type="GO" id="GO:0016020">
    <property type="term" value="C:membrane"/>
    <property type="evidence" value="ECO:0007669"/>
    <property type="project" value="GOC"/>
</dbReference>
<dbReference type="GO" id="GO:0019134">
    <property type="term" value="F:glucosamine-1-phosphate N-acetyltransferase activity"/>
    <property type="evidence" value="ECO:0007669"/>
    <property type="project" value="UniProtKB-UniRule"/>
</dbReference>
<dbReference type="GO" id="GO:0000287">
    <property type="term" value="F:magnesium ion binding"/>
    <property type="evidence" value="ECO:0007669"/>
    <property type="project" value="UniProtKB-UniRule"/>
</dbReference>
<dbReference type="GO" id="GO:0043886">
    <property type="term" value="F:structural constituent of carboxysome shell"/>
    <property type="evidence" value="ECO:0007669"/>
    <property type="project" value="UniProtKB-ARBA"/>
</dbReference>
<dbReference type="GO" id="GO:0003977">
    <property type="term" value="F:UDP-N-acetylglucosamine diphosphorylase activity"/>
    <property type="evidence" value="ECO:0007669"/>
    <property type="project" value="UniProtKB-UniRule"/>
</dbReference>
<dbReference type="GO" id="GO:0000902">
    <property type="term" value="P:cell morphogenesis"/>
    <property type="evidence" value="ECO:0007669"/>
    <property type="project" value="UniProtKB-UniRule"/>
</dbReference>
<dbReference type="GO" id="GO:0071555">
    <property type="term" value="P:cell wall organization"/>
    <property type="evidence" value="ECO:0007669"/>
    <property type="project" value="UniProtKB-KW"/>
</dbReference>
<dbReference type="GO" id="GO:0009245">
    <property type="term" value="P:lipid A biosynthetic process"/>
    <property type="evidence" value="ECO:0007669"/>
    <property type="project" value="UniProtKB-UniRule"/>
</dbReference>
<dbReference type="GO" id="GO:0009252">
    <property type="term" value="P:peptidoglycan biosynthetic process"/>
    <property type="evidence" value="ECO:0007669"/>
    <property type="project" value="UniProtKB-UniRule"/>
</dbReference>
<dbReference type="GO" id="GO:0008360">
    <property type="term" value="P:regulation of cell shape"/>
    <property type="evidence" value="ECO:0007669"/>
    <property type="project" value="UniProtKB-KW"/>
</dbReference>
<dbReference type="GO" id="GO:0006048">
    <property type="term" value="P:UDP-N-acetylglucosamine biosynthetic process"/>
    <property type="evidence" value="ECO:0007669"/>
    <property type="project" value="UniProtKB-UniPathway"/>
</dbReference>
<dbReference type="CDD" id="cd02540">
    <property type="entry name" value="GT2_GlmU_N_bac"/>
    <property type="match status" value="1"/>
</dbReference>
<dbReference type="CDD" id="cd03353">
    <property type="entry name" value="LbH_GlmU_C"/>
    <property type="match status" value="1"/>
</dbReference>
<dbReference type="Gene3D" id="2.160.10.10">
    <property type="entry name" value="Hexapeptide repeat proteins"/>
    <property type="match status" value="1"/>
</dbReference>
<dbReference type="Gene3D" id="3.90.550.10">
    <property type="entry name" value="Spore Coat Polysaccharide Biosynthesis Protein SpsA, Chain A"/>
    <property type="match status" value="1"/>
</dbReference>
<dbReference type="HAMAP" id="MF_01631">
    <property type="entry name" value="GlmU"/>
    <property type="match status" value="1"/>
</dbReference>
<dbReference type="InterPro" id="IPR005882">
    <property type="entry name" value="Bifunctional_GlmU"/>
</dbReference>
<dbReference type="InterPro" id="IPR050065">
    <property type="entry name" value="GlmU-like"/>
</dbReference>
<dbReference type="InterPro" id="IPR038009">
    <property type="entry name" value="GlmU_C_LbH"/>
</dbReference>
<dbReference type="InterPro" id="IPR001451">
    <property type="entry name" value="Hexapep"/>
</dbReference>
<dbReference type="InterPro" id="IPR025877">
    <property type="entry name" value="MobA-like_NTP_Trfase"/>
</dbReference>
<dbReference type="InterPro" id="IPR029044">
    <property type="entry name" value="Nucleotide-diphossugar_trans"/>
</dbReference>
<dbReference type="InterPro" id="IPR011004">
    <property type="entry name" value="Trimer_LpxA-like_sf"/>
</dbReference>
<dbReference type="NCBIfam" id="TIGR01173">
    <property type="entry name" value="glmU"/>
    <property type="match status" value="1"/>
</dbReference>
<dbReference type="NCBIfam" id="NF010940">
    <property type="entry name" value="PRK14360.1"/>
    <property type="match status" value="1"/>
</dbReference>
<dbReference type="PANTHER" id="PTHR43584:SF3">
    <property type="entry name" value="BIFUNCTIONAL PROTEIN GLMU"/>
    <property type="match status" value="1"/>
</dbReference>
<dbReference type="PANTHER" id="PTHR43584">
    <property type="entry name" value="NUCLEOTIDYL TRANSFERASE"/>
    <property type="match status" value="1"/>
</dbReference>
<dbReference type="Pfam" id="PF00132">
    <property type="entry name" value="Hexapep"/>
    <property type="match status" value="3"/>
</dbReference>
<dbReference type="Pfam" id="PF12804">
    <property type="entry name" value="NTP_transf_3"/>
    <property type="match status" value="1"/>
</dbReference>
<dbReference type="SUPFAM" id="SSF53448">
    <property type="entry name" value="Nucleotide-diphospho-sugar transferases"/>
    <property type="match status" value="1"/>
</dbReference>
<dbReference type="SUPFAM" id="SSF51161">
    <property type="entry name" value="Trimeric LpxA-like enzymes"/>
    <property type="match status" value="1"/>
</dbReference>
<name>GLMU_SYNR3</name>
<comment type="function">
    <text evidence="1">Catalyzes the last two sequential reactions in the de novo biosynthetic pathway for UDP-N-acetylglucosamine (UDP-GlcNAc). The C-terminal domain catalyzes the transfer of acetyl group from acetyl coenzyme A to glucosamine-1-phosphate (GlcN-1-P) to produce N-acetylglucosamine-1-phosphate (GlcNAc-1-P), which is converted into UDP-GlcNAc by the transfer of uridine 5-monophosphate (from uridine 5-triphosphate), a reaction catalyzed by the N-terminal domain.</text>
</comment>
<comment type="catalytic activity">
    <reaction evidence="1">
        <text>alpha-D-glucosamine 1-phosphate + acetyl-CoA = N-acetyl-alpha-D-glucosamine 1-phosphate + CoA + H(+)</text>
        <dbReference type="Rhea" id="RHEA:13725"/>
        <dbReference type="ChEBI" id="CHEBI:15378"/>
        <dbReference type="ChEBI" id="CHEBI:57287"/>
        <dbReference type="ChEBI" id="CHEBI:57288"/>
        <dbReference type="ChEBI" id="CHEBI:57776"/>
        <dbReference type="ChEBI" id="CHEBI:58516"/>
        <dbReference type="EC" id="2.3.1.157"/>
    </reaction>
</comment>
<comment type="catalytic activity">
    <reaction evidence="1">
        <text>N-acetyl-alpha-D-glucosamine 1-phosphate + UTP + H(+) = UDP-N-acetyl-alpha-D-glucosamine + diphosphate</text>
        <dbReference type="Rhea" id="RHEA:13509"/>
        <dbReference type="ChEBI" id="CHEBI:15378"/>
        <dbReference type="ChEBI" id="CHEBI:33019"/>
        <dbReference type="ChEBI" id="CHEBI:46398"/>
        <dbReference type="ChEBI" id="CHEBI:57705"/>
        <dbReference type="ChEBI" id="CHEBI:57776"/>
        <dbReference type="EC" id="2.7.7.23"/>
    </reaction>
</comment>
<comment type="cofactor">
    <cofactor evidence="1">
        <name>Mg(2+)</name>
        <dbReference type="ChEBI" id="CHEBI:18420"/>
    </cofactor>
    <text evidence="1">Binds 1 Mg(2+) ion per subunit.</text>
</comment>
<comment type="pathway">
    <text evidence="1">Nucleotide-sugar biosynthesis; UDP-N-acetyl-alpha-D-glucosamine biosynthesis; N-acetyl-alpha-D-glucosamine 1-phosphate from alpha-D-glucosamine 6-phosphate (route II): step 2/2.</text>
</comment>
<comment type="pathway">
    <text evidence="1">Nucleotide-sugar biosynthesis; UDP-N-acetyl-alpha-D-glucosamine biosynthesis; UDP-N-acetyl-alpha-D-glucosamine from N-acetyl-alpha-D-glucosamine 1-phosphate: step 1/1.</text>
</comment>
<comment type="pathway">
    <text evidence="1">Bacterial outer membrane biogenesis; LPS lipid A biosynthesis.</text>
</comment>
<comment type="subunit">
    <text evidence="1">Homotrimer.</text>
</comment>
<comment type="subcellular location">
    <subcellularLocation>
        <location evidence="1">Cytoplasm</location>
    </subcellularLocation>
</comment>
<comment type="similarity">
    <text evidence="1">In the N-terminal section; belongs to the N-acetylglucosamine-1-phosphate uridyltransferase family.</text>
</comment>
<comment type="similarity">
    <text evidence="1">In the C-terminal section; belongs to the transferase hexapeptide repeat family.</text>
</comment>